<accession>B0YN54</accession>
<accession>B0YL50</accession>
<evidence type="ECO:0000250" key="1"/>
<evidence type="ECO:0000250" key="2">
    <source>
        <dbReference type="UniProtKB" id="P68266"/>
    </source>
</evidence>
<evidence type="ECO:0000250" key="3">
    <source>
        <dbReference type="UniProtKB" id="Q9NZD2"/>
    </source>
</evidence>
<evidence type="ECO:0000305" key="4"/>
<keyword id="KW-0007">Acetylation</keyword>
<keyword id="KW-0963">Cytoplasm</keyword>
<keyword id="KW-0445">Lipid transport</keyword>
<keyword id="KW-1185">Reference proteome</keyword>
<keyword id="KW-0677">Repeat</keyword>
<keyword id="KW-0813">Transport</keyword>
<organism>
    <name type="scientific">Pan troglodytes</name>
    <name type="common">Chimpanzee</name>
    <dbReference type="NCBI Taxonomy" id="9598"/>
    <lineage>
        <taxon>Eukaryota</taxon>
        <taxon>Metazoa</taxon>
        <taxon>Chordata</taxon>
        <taxon>Craniata</taxon>
        <taxon>Vertebrata</taxon>
        <taxon>Euteleostomi</taxon>
        <taxon>Mammalia</taxon>
        <taxon>Eutheria</taxon>
        <taxon>Euarchontoglires</taxon>
        <taxon>Primates</taxon>
        <taxon>Haplorrhini</taxon>
        <taxon>Catarrhini</taxon>
        <taxon>Hominidae</taxon>
        <taxon>Pan</taxon>
    </lineage>
</organism>
<sequence>MALLAEHLLKPLPADKQIETGPFLEAVSHLPPFFDCLGSPVFTPIKADISGNITKIKAVYDTNPAKFRTLQNILEVEKEMYGAEWPKVGATLALMWLKRGLRFIQVFLQSICDGERDENHPNLIRVNATKAYEMALKKYHGWIVQKIFQAALYAAPYKSDFLKALSKGQNVTEEECLEKIRLFLVNYTATIDVIYEMYTQMNAELNYKV</sequence>
<feature type="initiator methionine" description="Removed" evidence="2">
    <location>
        <position position="1"/>
    </location>
</feature>
<feature type="chain" id="PRO_0000343608" description="Glycolipid transfer protein">
    <location>
        <begin position="2"/>
        <end position="209"/>
    </location>
</feature>
<feature type="repeat" description="1">
    <location>
        <begin position="45"/>
        <end position="55"/>
    </location>
</feature>
<feature type="repeat" description="2">
    <location>
        <begin position="56"/>
        <end position="66"/>
    </location>
</feature>
<feature type="region of interest" description="2 X 12 AA approximate tandem repeats">
    <location>
        <begin position="45"/>
        <end position="66"/>
    </location>
</feature>
<feature type="binding site" evidence="3">
    <location>
        <begin position="48"/>
        <end position="55"/>
    </location>
    <ligand>
        <name>beta-D-galactosyl-(1-&gt;4)-beta-D-glucosyl-(1&lt;-&gt;1)-N-[(9Z)-octadecenoyl]-sphing-4-enine</name>
        <dbReference type="ChEBI" id="CHEBI:131557"/>
    </ligand>
</feature>
<feature type="binding site" evidence="3">
    <location>
        <position position="140"/>
    </location>
    <ligand>
        <name>beta-D-galactosyl-(1-&gt;4)-beta-D-glucosyl-(1&lt;-&gt;1)-N-[(9Z)-octadecenoyl]-sphing-4-enine</name>
        <dbReference type="ChEBI" id="CHEBI:131557"/>
    </ligand>
</feature>
<feature type="binding site" evidence="3">
    <location>
        <position position="207"/>
    </location>
    <ligand>
        <name>beta-D-galactosyl-(1-&gt;4)-beta-D-glucosyl-(1&lt;-&gt;1)-N-[(9Z)-octadecenoyl]-sphing-4-enine</name>
        <dbReference type="ChEBI" id="CHEBI:131557"/>
    </ligand>
</feature>
<feature type="modified residue" description="N-acetylalanine" evidence="2">
    <location>
        <position position="2"/>
    </location>
</feature>
<dbReference type="EMBL" id="EF520721">
    <property type="protein sequence ID" value="ABP94016.1"/>
    <property type="molecule type" value="Genomic_DNA"/>
</dbReference>
<dbReference type="EMBL" id="EF688398">
    <property type="protein sequence ID" value="ABV45189.1"/>
    <property type="molecule type" value="mRNA"/>
</dbReference>
<dbReference type="RefSeq" id="NP_001108230.1">
    <property type="nucleotide sequence ID" value="NM_001114758.1"/>
</dbReference>
<dbReference type="SMR" id="B0YN54"/>
<dbReference type="FunCoup" id="B0YN54">
    <property type="interactions" value="715"/>
</dbReference>
<dbReference type="STRING" id="9598.ENSPTRP00000060721"/>
<dbReference type="PaxDb" id="9598-ENSPTRP00000060721"/>
<dbReference type="GeneID" id="467126"/>
<dbReference type="KEGG" id="ptr:467126"/>
<dbReference type="CTD" id="51228"/>
<dbReference type="eggNOG" id="KOG3221">
    <property type="taxonomic scope" value="Eukaryota"/>
</dbReference>
<dbReference type="InParanoid" id="B0YN54"/>
<dbReference type="Proteomes" id="UP000002277">
    <property type="component" value="Unplaced"/>
</dbReference>
<dbReference type="GO" id="GO:0005829">
    <property type="term" value="C:cytosol"/>
    <property type="evidence" value="ECO:0000318"/>
    <property type="project" value="GO_Central"/>
</dbReference>
<dbReference type="GO" id="GO:1902387">
    <property type="term" value="F:ceramide 1-phosphate binding"/>
    <property type="evidence" value="ECO:0000318"/>
    <property type="project" value="GO_Central"/>
</dbReference>
<dbReference type="GO" id="GO:1902388">
    <property type="term" value="F:ceramide 1-phosphate transfer activity"/>
    <property type="evidence" value="ECO:0000318"/>
    <property type="project" value="GO_Central"/>
</dbReference>
<dbReference type="GO" id="GO:0035627">
    <property type="term" value="P:ceramide transport"/>
    <property type="evidence" value="ECO:0000318"/>
    <property type="project" value="GO_Central"/>
</dbReference>
<dbReference type="GO" id="GO:0120009">
    <property type="term" value="P:intermembrane lipid transfer"/>
    <property type="evidence" value="ECO:0000318"/>
    <property type="project" value="GO_Central"/>
</dbReference>
<dbReference type="FunFam" id="1.10.3520.10:FF:000003">
    <property type="entry name" value="glycolipid transfer protein"/>
    <property type="match status" value="1"/>
</dbReference>
<dbReference type="Gene3D" id="1.10.3520.10">
    <property type="entry name" value="Glycolipid transfer protein"/>
    <property type="match status" value="1"/>
</dbReference>
<dbReference type="InterPro" id="IPR036497">
    <property type="entry name" value="GLTP_sf"/>
</dbReference>
<dbReference type="InterPro" id="IPR014830">
    <property type="entry name" value="Glycolipid_transfer_prot_dom"/>
</dbReference>
<dbReference type="PANTHER" id="PTHR10219:SF97">
    <property type="entry name" value="GLYCOLIPID TRANSFER PROTEIN"/>
    <property type="match status" value="1"/>
</dbReference>
<dbReference type="PANTHER" id="PTHR10219">
    <property type="entry name" value="GLYCOLIPID TRANSFER PROTEIN-RELATED"/>
    <property type="match status" value="1"/>
</dbReference>
<dbReference type="Pfam" id="PF08718">
    <property type="entry name" value="GLTP"/>
    <property type="match status" value="1"/>
</dbReference>
<dbReference type="SUPFAM" id="SSF110004">
    <property type="entry name" value="Glycolipid transfer protein, GLTP"/>
    <property type="match status" value="1"/>
</dbReference>
<name>GLTP_PANTR</name>
<reference key="1">
    <citation type="journal article" date="2008" name="BMC Genomics">
        <title>Human glycolipid transfer protein (GLTP) genes: organization, transcriptional status and evolution.</title>
        <authorList>
            <person name="Zou X."/>
            <person name="Chung T."/>
            <person name="Lin X."/>
            <person name="Malakhova M.L."/>
            <person name="Pike H.M."/>
            <person name="Brown R.E."/>
        </authorList>
    </citation>
    <scope>NUCLEOTIDE SEQUENCE [GENOMIC DNA / MRNA]</scope>
    <source>
        <tissue>Skin fibroblast</tissue>
    </source>
</reference>
<comment type="function">
    <text evidence="1">Accelerates the intermembrane transfer of various glycolipids. Catalyzes the transfer of various glycosphingolipids between membranes but does not catalyze the transfer of phospholipids. May be involved in the intracellular translocation of glucosylceramides (By similarity).</text>
</comment>
<comment type="subunit">
    <text evidence="1">Monomer.</text>
</comment>
<comment type="subcellular location">
    <subcellularLocation>
        <location evidence="1">Cytoplasm</location>
    </subcellularLocation>
</comment>
<comment type="similarity">
    <text evidence="4">Belongs to the GLTP family.</text>
</comment>
<gene>
    <name type="primary">GLTP</name>
</gene>
<protein>
    <recommendedName>
        <fullName>Glycolipid transfer protein</fullName>
        <shortName>GLTP</shortName>
    </recommendedName>
</protein>
<proteinExistence type="evidence at transcript level"/>